<proteinExistence type="evidence at protein level"/>
<sequence length="342" mass="37345">MSRIIGRKGINYIHRLNSASFTSVSASSIEKGQNRVIDASLTLIRERAKLKGELVRLLGGAKASTSLLGVPLGHNSSFLQGPAFAPPRIREAIWCGSTNSATEEGKELKDPRVLTDVGDVPVQEIRDCGVDDDRLMNVISESVKLVMEEEPLRPLVLGGDHSISYPVVRAVSEKLGGPVDILHLDAHPDIYDCFEGNKYSHASSFARIMEGGYARRLLQVGIRSINQEGREQGKRFGVEQYEMRTFSKDRPMLENLKLGEGVKGVYISIDVDCLDPAFAPGVSHIEPGGLSFRDVLNILHNLQADVVGADVVEFNPQRDTVDGMTAMVAAKLVRELAAKISK</sequence>
<name>ARGI1_ARATH</name>
<dbReference type="EC" id="3.5.3.1" evidence="13"/>
<dbReference type="EC" id="3.5.3.11" evidence="12"/>
<dbReference type="EMBL" id="U15019">
    <property type="protein sequence ID" value="AAA85816.1"/>
    <property type="molecule type" value="mRNA"/>
</dbReference>
<dbReference type="EMBL" id="AF128396">
    <property type="protein sequence ID" value="AAD17369.1"/>
    <property type="molecule type" value="Genomic_DNA"/>
</dbReference>
<dbReference type="EMBL" id="AL161513">
    <property type="protein sequence ID" value="CAB78014.1"/>
    <property type="molecule type" value="Genomic_DNA"/>
</dbReference>
<dbReference type="EMBL" id="CP002687">
    <property type="protein sequence ID" value="AEE82694.1"/>
    <property type="molecule type" value="Genomic_DNA"/>
</dbReference>
<dbReference type="EMBL" id="AY052276">
    <property type="protein sequence ID" value="AAK96469.1"/>
    <property type="molecule type" value="mRNA"/>
</dbReference>
<dbReference type="EMBL" id="AY061914">
    <property type="protein sequence ID" value="AAL31241.1"/>
    <property type="molecule type" value="mRNA"/>
</dbReference>
<dbReference type="PIR" id="F85089">
    <property type="entry name" value="F85089"/>
</dbReference>
<dbReference type="RefSeq" id="NP_192629.1">
    <property type="nucleotide sequence ID" value="NM_116959.4"/>
</dbReference>
<dbReference type="PDB" id="6VSU">
    <property type="method" value="X-ray"/>
    <property type="resolution" value="2.25 A"/>
    <property type="chains" value="A/B/C/D/E/F/G/H/I/J/K/L/M/N/O/P/Q/R/S/T/U/V/W/X=25-342"/>
</dbReference>
<dbReference type="PDBsum" id="6VSU"/>
<dbReference type="SMR" id="P46637"/>
<dbReference type="BioGRID" id="11767">
    <property type="interactions" value="2"/>
</dbReference>
<dbReference type="FunCoup" id="P46637">
    <property type="interactions" value="1464"/>
</dbReference>
<dbReference type="IntAct" id="P46637">
    <property type="interactions" value="1"/>
</dbReference>
<dbReference type="STRING" id="3702.P46637"/>
<dbReference type="MetOSite" id="P46637"/>
<dbReference type="PaxDb" id="3702-AT4G08900.1"/>
<dbReference type="ProteomicsDB" id="246832"/>
<dbReference type="EnsemblPlants" id="AT4G08900.1">
    <property type="protein sequence ID" value="AT4G08900.1"/>
    <property type="gene ID" value="AT4G08900"/>
</dbReference>
<dbReference type="GeneID" id="826468"/>
<dbReference type="Gramene" id="AT4G08900.1">
    <property type="protein sequence ID" value="AT4G08900.1"/>
    <property type="gene ID" value="AT4G08900"/>
</dbReference>
<dbReference type="KEGG" id="ath:AT4G08900"/>
<dbReference type="Araport" id="AT4G08900"/>
<dbReference type="TAIR" id="AT4G08900">
    <property type="gene designation" value="ARGAH1"/>
</dbReference>
<dbReference type="eggNOG" id="KOG2964">
    <property type="taxonomic scope" value="Eukaryota"/>
</dbReference>
<dbReference type="HOGENOM" id="CLU_039478_3_0_1"/>
<dbReference type="InParanoid" id="P46637"/>
<dbReference type="OMA" id="CIDAGFV"/>
<dbReference type="OrthoDB" id="288726at2759"/>
<dbReference type="PhylomeDB" id="P46637"/>
<dbReference type="BioCyc" id="ARA:AT4G08900-MONOMER"/>
<dbReference type="BioCyc" id="MetaCyc:AT4G08900-MONOMER"/>
<dbReference type="UniPathway" id="UPA00158">
    <property type="reaction ID" value="UER00270"/>
</dbReference>
<dbReference type="UniPathway" id="UPA00534">
    <property type="reaction ID" value="UER00287"/>
</dbReference>
<dbReference type="PRO" id="PR:P46637"/>
<dbReference type="Proteomes" id="UP000006548">
    <property type="component" value="Chromosome 4"/>
</dbReference>
<dbReference type="ExpressionAtlas" id="P46637">
    <property type="expression patterns" value="baseline and differential"/>
</dbReference>
<dbReference type="GO" id="GO:0005829">
    <property type="term" value="C:cytosol"/>
    <property type="evidence" value="ECO:0007005"/>
    <property type="project" value="TAIR"/>
</dbReference>
<dbReference type="GO" id="GO:0005739">
    <property type="term" value="C:mitochondrion"/>
    <property type="evidence" value="ECO:0007669"/>
    <property type="project" value="UniProtKB-SubCell"/>
</dbReference>
<dbReference type="GO" id="GO:0008783">
    <property type="term" value="F:agmatinase activity"/>
    <property type="evidence" value="ECO:0000314"/>
    <property type="project" value="UniProtKB"/>
</dbReference>
<dbReference type="GO" id="GO:0004053">
    <property type="term" value="F:arginase activity"/>
    <property type="evidence" value="ECO:0000315"/>
    <property type="project" value="TAIR"/>
</dbReference>
<dbReference type="GO" id="GO:0050897">
    <property type="term" value="F:cobalt ion binding"/>
    <property type="evidence" value="ECO:0007005"/>
    <property type="project" value="TAIR"/>
</dbReference>
<dbReference type="GO" id="GO:0000287">
    <property type="term" value="F:magnesium ion binding"/>
    <property type="evidence" value="ECO:0000314"/>
    <property type="project" value="UniProtKB"/>
</dbReference>
<dbReference type="GO" id="GO:0006527">
    <property type="term" value="P:arginine catabolic process"/>
    <property type="evidence" value="ECO:0000316"/>
    <property type="project" value="TAIR"/>
</dbReference>
<dbReference type="GO" id="GO:0034214">
    <property type="term" value="P:protein hexamerization"/>
    <property type="evidence" value="ECO:0000314"/>
    <property type="project" value="UniProtKB"/>
</dbReference>
<dbReference type="GO" id="GO:0033389">
    <property type="term" value="P:putrescine biosynthetic process from arginine, via agmatine"/>
    <property type="evidence" value="ECO:0000314"/>
    <property type="project" value="UniProtKB"/>
</dbReference>
<dbReference type="GO" id="GO:0000050">
    <property type="term" value="P:urea cycle"/>
    <property type="evidence" value="ECO:0007669"/>
    <property type="project" value="UniProtKB-UniPathway"/>
</dbReference>
<dbReference type="CDD" id="cd11593">
    <property type="entry name" value="Agmatinase-like_2"/>
    <property type="match status" value="1"/>
</dbReference>
<dbReference type="FunFam" id="3.40.800.10:FF:000007">
    <property type="entry name" value="Arginase 1, mitochondrial"/>
    <property type="match status" value="1"/>
</dbReference>
<dbReference type="Gene3D" id="3.40.800.10">
    <property type="entry name" value="Ureohydrolase domain"/>
    <property type="match status" value="1"/>
</dbReference>
<dbReference type="InterPro" id="IPR006035">
    <property type="entry name" value="Ureohydrolase"/>
</dbReference>
<dbReference type="InterPro" id="IPR023696">
    <property type="entry name" value="Ureohydrolase_dom_sf"/>
</dbReference>
<dbReference type="InterPro" id="IPR020855">
    <property type="entry name" value="Ureohydrolase_Mn_BS"/>
</dbReference>
<dbReference type="PANTHER" id="PTHR11358">
    <property type="entry name" value="ARGINASE/AGMATINASE"/>
    <property type="match status" value="1"/>
</dbReference>
<dbReference type="PANTHER" id="PTHR11358:SF26">
    <property type="entry name" value="GUANIDINO ACID HYDROLASE, MITOCHONDRIAL"/>
    <property type="match status" value="1"/>
</dbReference>
<dbReference type="Pfam" id="PF00491">
    <property type="entry name" value="Arginase"/>
    <property type="match status" value="1"/>
</dbReference>
<dbReference type="PIRSF" id="PIRSF036979">
    <property type="entry name" value="Arginase"/>
    <property type="match status" value="1"/>
</dbReference>
<dbReference type="SUPFAM" id="SSF52768">
    <property type="entry name" value="Arginase/deacetylase"/>
    <property type="match status" value="1"/>
</dbReference>
<dbReference type="PROSITE" id="PS01053">
    <property type="entry name" value="ARGINASE_1"/>
    <property type="match status" value="1"/>
</dbReference>
<dbReference type="PROSITE" id="PS51409">
    <property type="entry name" value="ARGINASE_2"/>
    <property type="match status" value="1"/>
</dbReference>
<evidence type="ECO:0000250" key="1">
    <source>
        <dbReference type="UniProtKB" id="P05089"/>
    </source>
</evidence>
<evidence type="ECO:0000250" key="2">
    <source>
        <dbReference type="UniProtKB" id="P53608"/>
    </source>
</evidence>
<evidence type="ECO:0000255" key="3">
    <source>
        <dbReference type="PROSITE-ProRule" id="PRU00742"/>
    </source>
</evidence>
<evidence type="ECO:0000269" key="4">
    <source>
    </source>
</evidence>
<evidence type="ECO:0000269" key="5">
    <source>
    </source>
</evidence>
<evidence type="ECO:0000269" key="6">
    <source>
    </source>
</evidence>
<evidence type="ECO:0000269" key="7">
    <source>
    </source>
</evidence>
<evidence type="ECO:0000269" key="8">
    <source>
    </source>
</evidence>
<evidence type="ECO:0000303" key="9">
    <source>
    </source>
</evidence>
<evidence type="ECO:0000305" key="10"/>
<evidence type="ECO:0000305" key="11">
    <source>
    </source>
</evidence>
<evidence type="ECO:0000305" key="12">
    <source>
    </source>
</evidence>
<evidence type="ECO:0000305" key="13">
    <source>
    </source>
</evidence>
<evidence type="ECO:0007829" key="14">
    <source>
        <dbReference type="PDB" id="6VSU"/>
    </source>
</evidence>
<accession>P46637</accession>
<organism>
    <name type="scientific">Arabidopsis thaliana</name>
    <name type="common">Mouse-ear cress</name>
    <dbReference type="NCBI Taxonomy" id="3702"/>
    <lineage>
        <taxon>Eukaryota</taxon>
        <taxon>Viridiplantae</taxon>
        <taxon>Streptophyta</taxon>
        <taxon>Embryophyta</taxon>
        <taxon>Tracheophyta</taxon>
        <taxon>Spermatophyta</taxon>
        <taxon>Magnoliopsida</taxon>
        <taxon>eudicotyledons</taxon>
        <taxon>Gunneridae</taxon>
        <taxon>Pentapetalae</taxon>
        <taxon>rosids</taxon>
        <taxon>malvids</taxon>
        <taxon>Brassicales</taxon>
        <taxon>Brassicaceae</taxon>
        <taxon>Camelineae</taxon>
        <taxon>Arabidopsis</taxon>
    </lineage>
</organism>
<protein>
    <recommendedName>
        <fullName evidence="10">Arginase 1, mitochondrial</fullName>
        <ecNumber evidence="13">3.5.3.1</ecNumber>
    </recommendedName>
    <alternativeName>
        <fullName evidence="10">Agmatinase ARGAH1</fullName>
        <ecNumber evidence="12">3.5.3.11</ecNumber>
    </alternativeName>
    <alternativeName>
        <fullName evidence="10">Arginine amidohydrolase 1</fullName>
        <shortName evidence="9">AtARGAH1</shortName>
    </alternativeName>
</protein>
<comment type="function">
    <text evidence="7 13">Catalyzes the hydrolysis of L-arginine to urea and L-ornithine (Probable). The latter can be utilized in the urea cycle or as a precursor for the synthesis of both polyamines and proline (Probable). Possesses agmatinase activity. Catalyzes the formation of putrescine from agmatine (PubMed:28716421).</text>
</comment>
<comment type="catalytic activity">
    <reaction evidence="13">
        <text>L-arginine + H2O = urea + L-ornithine</text>
        <dbReference type="Rhea" id="RHEA:20569"/>
        <dbReference type="ChEBI" id="CHEBI:15377"/>
        <dbReference type="ChEBI" id="CHEBI:16199"/>
        <dbReference type="ChEBI" id="CHEBI:32682"/>
        <dbReference type="ChEBI" id="CHEBI:46911"/>
        <dbReference type="EC" id="3.5.3.1"/>
    </reaction>
</comment>
<comment type="catalytic activity">
    <reaction evidence="12">
        <text>agmatine + H2O = urea + putrescine</text>
        <dbReference type="Rhea" id="RHEA:13929"/>
        <dbReference type="ChEBI" id="CHEBI:15377"/>
        <dbReference type="ChEBI" id="CHEBI:16199"/>
        <dbReference type="ChEBI" id="CHEBI:58145"/>
        <dbReference type="ChEBI" id="CHEBI:326268"/>
        <dbReference type="EC" id="3.5.3.11"/>
    </reaction>
</comment>
<comment type="cofactor">
    <cofactor evidence="3 8">
        <name>Mn(2+)</name>
        <dbReference type="ChEBI" id="CHEBI:29035"/>
    </cofactor>
    <text evidence="3 8">Binds 2 manganese ions per subunit.</text>
</comment>
<comment type="pathway">
    <text evidence="1">Nitrogen metabolism; urea cycle; L-ornithine and urea from L-arginine: step 1/1.</text>
</comment>
<comment type="pathway">
    <text evidence="12">Amine and polyamine biosynthesis; putrescine biosynthesis via agmatine pathway; putrescine from agmatine: step 1/1.</text>
</comment>
<comment type="subunit">
    <text evidence="8">Forms homohexamers.</text>
</comment>
<comment type="subcellular location">
    <subcellularLocation>
        <location evidence="5 11">Mitochondrion</location>
    </subcellularLocation>
</comment>
<comment type="tissue specificity">
    <text evidence="4 5">Expressed in vasculature of roots, root tips, cotyledons, leaves, cauline leaves, stems, sepals and pollen.</text>
</comment>
<comment type="disruption phenotype">
    <text evidence="5">Increased formation of lateral and adventitious roots and increased production of NO in roots.</text>
</comment>
<comment type="similarity">
    <text evidence="3">Belongs to the arginase family.</text>
</comment>
<keyword id="KW-0002">3D-structure</keyword>
<keyword id="KW-0056">Arginine metabolism</keyword>
<keyword id="KW-0378">Hydrolase</keyword>
<keyword id="KW-0464">Manganese</keyword>
<keyword id="KW-0479">Metal-binding</keyword>
<keyword id="KW-0496">Mitochondrion</keyword>
<keyword id="KW-0661">Putrescine biosynthesis</keyword>
<keyword id="KW-1185">Reference proteome</keyword>
<keyword id="KW-0809">Transit peptide</keyword>
<feature type="transit peptide" description="Mitochondrion" evidence="6">
    <location>
        <begin position="1"/>
        <end position="22"/>
    </location>
</feature>
<feature type="chain" id="PRO_0000173703" description="Arginase 1, mitochondrial">
    <location>
        <begin position="23"/>
        <end position="342"/>
    </location>
</feature>
<feature type="binding site" evidence="8">
    <location>
        <position position="77"/>
    </location>
    <ligand>
        <name>L-ornithine</name>
        <dbReference type="ChEBI" id="CHEBI:46911"/>
    </ligand>
</feature>
<feature type="binding site" evidence="8">
    <location>
        <begin position="96"/>
        <end position="99"/>
    </location>
    <ligand>
        <name>L-ornithine</name>
        <dbReference type="ChEBI" id="CHEBI:46911"/>
    </ligand>
</feature>
<feature type="binding site" evidence="3 8">
    <location>
        <position position="161"/>
    </location>
    <ligand>
        <name>Mn(2+)</name>
        <dbReference type="ChEBI" id="CHEBI:29035"/>
        <label>1</label>
    </ligand>
</feature>
<feature type="binding site" evidence="3 8">
    <location>
        <position position="185"/>
    </location>
    <ligand>
        <name>Mn(2+)</name>
        <dbReference type="ChEBI" id="CHEBI:29035"/>
        <label>1</label>
    </ligand>
</feature>
<feature type="binding site" evidence="3 8">
    <location>
        <position position="185"/>
    </location>
    <ligand>
        <name>Mn(2+)</name>
        <dbReference type="ChEBI" id="CHEBI:29035"/>
        <label>2</label>
    </ligand>
</feature>
<feature type="binding site" evidence="3 8">
    <location>
        <position position="187"/>
    </location>
    <ligand>
        <name>Mn(2+)</name>
        <dbReference type="ChEBI" id="CHEBI:29035"/>
        <label>2</label>
    </ligand>
</feature>
<feature type="binding site" evidence="8">
    <location>
        <begin position="189"/>
        <end position="191"/>
    </location>
    <ligand>
        <name>L-ornithine</name>
        <dbReference type="ChEBI" id="CHEBI:46911"/>
    </ligand>
</feature>
<feature type="binding site" evidence="3 8">
    <location>
        <position position="189"/>
    </location>
    <ligand>
        <name>Mn(2+)</name>
        <dbReference type="ChEBI" id="CHEBI:29035"/>
        <label>1</label>
    </ligand>
</feature>
<feature type="binding site" evidence="2">
    <location>
        <begin position="195"/>
        <end position="197"/>
    </location>
    <ligand>
        <name>substrate</name>
    </ligand>
</feature>
<feature type="binding site" evidence="8">
    <location>
        <position position="224"/>
    </location>
    <ligand>
        <name>L-ornithine</name>
        <dbReference type="ChEBI" id="CHEBI:46911"/>
    </ligand>
</feature>
<feature type="binding site" evidence="3 8">
    <location>
        <position position="270"/>
    </location>
    <ligand>
        <name>Mn(2+)</name>
        <dbReference type="ChEBI" id="CHEBI:29035"/>
        <label>1</label>
    </ligand>
</feature>
<feature type="binding site" evidence="3 8">
    <location>
        <position position="270"/>
    </location>
    <ligand>
        <name>Mn(2+)</name>
        <dbReference type="ChEBI" id="CHEBI:29035"/>
        <label>2</label>
    </ligand>
</feature>
<feature type="binding site" evidence="3 8">
    <location>
        <position position="272"/>
    </location>
    <ligand>
        <name>Mn(2+)</name>
        <dbReference type="ChEBI" id="CHEBI:29035"/>
        <label>2</label>
    </ligand>
</feature>
<feature type="binding site" evidence="13">
    <location>
        <position position="313"/>
    </location>
    <ligand>
        <name>substrate</name>
    </ligand>
</feature>
<feature type="helix" evidence="14">
    <location>
        <begin position="29"/>
        <end position="57"/>
    </location>
</feature>
<feature type="strand" evidence="14">
    <location>
        <begin position="62"/>
        <end position="70"/>
    </location>
</feature>
<feature type="helix" evidence="14">
    <location>
        <begin position="81"/>
        <end position="84"/>
    </location>
</feature>
<feature type="helix" evidence="14">
    <location>
        <begin position="85"/>
        <end position="93"/>
    </location>
</feature>
<feature type="turn" evidence="14">
    <location>
        <begin position="111"/>
        <end position="113"/>
    </location>
</feature>
<feature type="strand" evidence="14">
    <location>
        <begin position="114"/>
        <end position="119"/>
    </location>
</feature>
<feature type="helix" evidence="14">
    <location>
        <begin position="122"/>
        <end position="127"/>
    </location>
</feature>
<feature type="helix" evidence="14">
    <location>
        <begin position="132"/>
        <end position="148"/>
    </location>
</feature>
<feature type="strand" evidence="14">
    <location>
        <begin position="152"/>
        <end position="160"/>
    </location>
</feature>
<feature type="helix" evidence="14">
    <location>
        <begin position="161"/>
        <end position="163"/>
    </location>
</feature>
<feature type="helix" evidence="14">
    <location>
        <begin position="164"/>
        <end position="175"/>
    </location>
</feature>
<feature type="strand" evidence="14">
    <location>
        <begin position="179"/>
        <end position="184"/>
    </location>
</feature>
<feature type="helix" evidence="14">
    <location>
        <begin position="194"/>
        <end position="196"/>
    </location>
</feature>
<feature type="helix" evidence="14">
    <location>
        <begin position="204"/>
        <end position="210"/>
    </location>
</feature>
<feature type="strand" evidence="14">
    <location>
        <begin position="214"/>
        <end position="222"/>
    </location>
</feature>
<feature type="helix" evidence="14">
    <location>
        <begin position="227"/>
        <end position="236"/>
    </location>
</feature>
<feature type="strand" evidence="14">
    <location>
        <begin position="239"/>
        <end position="242"/>
    </location>
</feature>
<feature type="helix" evidence="14">
    <location>
        <begin position="243"/>
        <end position="245"/>
    </location>
</feature>
<feature type="helix" evidence="14">
    <location>
        <begin position="246"/>
        <end position="253"/>
    </location>
</feature>
<feature type="strand" evidence="14">
    <location>
        <begin position="265"/>
        <end position="270"/>
    </location>
</feature>
<feature type="helix" evidence="14">
    <location>
        <begin position="271"/>
        <end position="273"/>
    </location>
</feature>
<feature type="turn" evidence="14">
    <location>
        <begin position="276"/>
        <end position="278"/>
    </location>
</feature>
<feature type="strand" evidence="14">
    <location>
        <begin position="282"/>
        <end position="284"/>
    </location>
</feature>
<feature type="helix" evidence="14">
    <location>
        <begin position="292"/>
        <end position="301"/>
    </location>
</feature>
<feature type="strand" evidence="14">
    <location>
        <begin position="306"/>
        <end position="312"/>
    </location>
</feature>
<feature type="helix" evidence="14">
    <location>
        <begin position="316"/>
        <end position="318"/>
    </location>
</feature>
<feature type="helix" evidence="14">
    <location>
        <begin position="324"/>
        <end position="340"/>
    </location>
</feature>
<gene>
    <name evidence="9" type="primary">ARGAH1</name>
    <name type="ordered locus">At4g08900</name>
    <name type="ORF">T3H13.7</name>
</gene>
<reference key="1">
    <citation type="journal article" date="1995" name="Plant Physiol.">
        <title>Nucleotide sequence of Arabidopsis thaliana arginase expressed in yeast.</title>
        <authorList>
            <person name="Krumpelman P.M."/>
            <person name="Freyermuth S.K."/>
            <person name="Cannon J.F."/>
            <person name="Fink G.R."/>
            <person name="Polacco J.C."/>
        </authorList>
    </citation>
    <scope>NUCLEOTIDE SEQUENCE [MRNA]</scope>
    <source>
        <strain>cv. Landsberg erecta</strain>
    </source>
</reference>
<reference key="2">
    <citation type="journal article" date="1999" name="Nature">
        <title>Sequence and analysis of chromosome 4 of the plant Arabidopsis thaliana.</title>
        <authorList>
            <person name="Mayer K.F.X."/>
            <person name="Schueller C."/>
            <person name="Wambutt R."/>
            <person name="Murphy G."/>
            <person name="Volckaert G."/>
            <person name="Pohl T."/>
            <person name="Duesterhoeft A."/>
            <person name="Stiekema W."/>
            <person name="Entian K.-D."/>
            <person name="Terryn N."/>
            <person name="Harris B."/>
            <person name="Ansorge W."/>
            <person name="Brandt P."/>
            <person name="Grivell L.A."/>
            <person name="Rieger M."/>
            <person name="Weichselgartner M."/>
            <person name="de Simone V."/>
            <person name="Obermaier B."/>
            <person name="Mache R."/>
            <person name="Mueller M."/>
            <person name="Kreis M."/>
            <person name="Delseny M."/>
            <person name="Puigdomenech P."/>
            <person name="Watson M."/>
            <person name="Schmidtheini T."/>
            <person name="Reichert B."/>
            <person name="Portetelle D."/>
            <person name="Perez-Alonso M."/>
            <person name="Boutry M."/>
            <person name="Bancroft I."/>
            <person name="Vos P."/>
            <person name="Hoheisel J."/>
            <person name="Zimmermann W."/>
            <person name="Wedler H."/>
            <person name="Ridley P."/>
            <person name="Langham S.-A."/>
            <person name="McCullagh B."/>
            <person name="Bilham L."/>
            <person name="Robben J."/>
            <person name="van der Schueren J."/>
            <person name="Grymonprez B."/>
            <person name="Chuang Y.-J."/>
            <person name="Vandenbussche F."/>
            <person name="Braeken M."/>
            <person name="Weltjens I."/>
            <person name="Voet M."/>
            <person name="Bastiaens I."/>
            <person name="Aert R."/>
            <person name="Defoor E."/>
            <person name="Weitzenegger T."/>
            <person name="Bothe G."/>
            <person name="Ramsperger U."/>
            <person name="Hilbert H."/>
            <person name="Braun M."/>
            <person name="Holzer E."/>
            <person name="Brandt A."/>
            <person name="Peters S."/>
            <person name="van Staveren M."/>
            <person name="Dirkse W."/>
            <person name="Mooijman P."/>
            <person name="Klein Lankhorst R."/>
            <person name="Rose M."/>
            <person name="Hauf J."/>
            <person name="Koetter P."/>
            <person name="Berneiser S."/>
            <person name="Hempel S."/>
            <person name="Feldpausch M."/>
            <person name="Lamberth S."/>
            <person name="Van den Daele H."/>
            <person name="De Keyser A."/>
            <person name="Buysshaert C."/>
            <person name="Gielen J."/>
            <person name="Villarroel R."/>
            <person name="De Clercq R."/>
            <person name="van Montagu M."/>
            <person name="Rogers J."/>
            <person name="Cronin A."/>
            <person name="Quail M.A."/>
            <person name="Bray-Allen S."/>
            <person name="Clark L."/>
            <person name="Doggett J."/>
            <person name="Hall S."/>
            <person name="Kay M."/>
            <person name="Lennard N."/>
            <person name="McLay K."/>
            <person name="Mayes R."/>
            <person name="Pettett A."/>
            <person name="Rajandream M.A."/>
            <person name="Lyne M."/>
            <person name="Benes V."/>
            <person name="Rechmann S."/>
            <person name="Borkova D."/>
            <person name="Bloecker H."/>
            <person name="Scharfe M."/>
            <person name="Grimm M."/>
            <person name="Loehnert T.-H."/>
            <person name="Dose S."/>
            <person name="de Haan M."/>
            <person name="Maarse A.C."/>
            <person name="Schaefer M."/>
            <person name="Mueller-Auer S."/>
            <person name="Gabel C."/>
            <person name="Fuchs M."/>
            <person name="Fartmann B."/>
            <person name="Granderath K."/>
            <person name="Dauner D."/>
            <person name="Herzl A."/>
            <person name="Neumann S."/>
            <person name="Argiriou A."/>
            <person name="Vitale D."/>
            <person name="Liguori R."/>
            <person name="Piravandi E."/>
            <person name="Massenet O."/>
            <person name="Quigley F."/>
            <person name="Clabauld G."/>
            <person name="Muendlein A."/>
            <person name="Felber R."/>
            <person name="Schnabl S."/>
            <person name="Hiller R."/>
            <person name="Schmidt W."/>
            <person name="Lecharny A."/>
            <person name="Aubourg S."/>
            <person name="Chefdor F."/>
            <person name="Cooke R."/>
            <person name="Berger C."/>
            <person name="Monfort A."/>
            <person name="Casacuberta E."/>
            <person name="Gibbons T."/>
            <person name="Weber N."/>
            <person name="Vandenbol M."/>
            <person name="Bargues M."/>
            <person name="Terol J."/>
            <person name="Torres A."/>
            <person name="Perez-Perez A."/>
            <person name="Purnelle B."/>
            <person name="Bent E."/>
            <person name="Johnson S."/>
            <person name="Tacon D."/>
            <person name="Jesse T."/>
            <person name="Heijnen L."/>
            <person name="Schwarz S."/>
            <person name="Scholler P."/>
            <person name="Heber S."/>
            <person name="Francs P."/>
            <person name="Bielke C."/>
            <person name="Frishman D."/>
            <person name="Haase D."/>
            <person name="Lemcke K."/>
            <person name="Mewes H.-W."/>
            <person name="Stocker S."/>
            <person name="Zaccaria P."/>
            <person name="Bevan M."/>
            <person name="Wilson R.K."/>
            <person name="de la Bastide M."/>
            <person name="Habermann K."/>
            <person name="Parnell L."/>
            <person name="Dedhia N."/>
            <person name="Gnoj L."/>
            <person name="Schutz K."/>
            <person name="Huang E."/>
            <person name="Spiegel L."/>
            <person name="Sekhon M."/>
            <person name="Murray J."/>
            <person name="Sheet P."/>
            <person name="Cordes M."/>
            <person name="Abu-Threideh J."/>
            <person name="Stoneking T."/>
            <person name="Kalicki J."/>
            <person name="Graves T."/>
            <person name="Harmon G."/>
            <person name="Edwards J."/>
            <person name="Latreille P."/>
            <person name="Courtney L."/>
            <person name="Cloud J."/>
            <person name="Abbott A."/>
            <person name="Scott K."/>
            <person name="Johnson D."/>
            <person name="Minx P."/>
            <person name="Bentley D."/>
            <person name="Fulton B."/>
            <person name="Miller N."/>
            <person name="Greco T."/>
            <person name="Kemp K."/>
            <person name="Kramer J."/>
            <person name="Fulton L."/>
            <person name="Mardis E."/>
            <person name="Dante M."/>
            <person name="Pepin K."/>
            <person name="Hillier L.W."/>
            <person name="Nelson J."/>
            <person name="Spieth J."/>
            <person name="Ryan E."/>
            <person name="Andrews S."/>
            <person name="Geisel C."/>
            <person name="Layman D."/>
            <person name="Du H."/>
            <person name="Ali J."/>
            <person name="Berghoff A."/>
            <person name="Jones K."/>
            <person name="Drone K."/>
            <person name="Cotton M."/>
            <person name="Joshu C."/>
            <person name="Antonoiu B."/>
            <person name="Zidanic M."/>
            <person name="Strong C."/>
            <person name="Sun H."/>
            <person name="Lamar B."/>
            <person name="Yordan C."/>
            <person name="Ma P."/>
            <person name="Zhong J."/>
            <person name="Preston R."/>
            <person name="Vil D."/>
            <person name="Shekher M."/>
            <person name="Matero A."/>
            <person name="Shah R."/>
            <person name="Swaby I.K."/>
            <person name="O'Shaughnessy A."/>
            <person name="Rodriguez M."/>
            <person name="Hoffman J."/>
            <person name="Till S."/>
            <person name="Granat S."/>
            <person name="Shohdy N."/>
            <person name="Hasegawa A."/>
            <person name="Hameed A."/>
            <person name="Lodhi M."/>
            <person name="Johnson A."/>
            <person name="Chen E."/>
            <person name="Marra M.A."/>
            <person name="Martienssen R."/>
            <person name="McCombie W.R."/>
        </authorList>
    </citation>
    <scope>NUCLEOTIDE SEQUENCE [LARGE SCALE GENOMIC DNA]</scope>
    <source>
        <strain>cv. Columbia</strain>
    </source>
</reference>
<reference key="3">
    <citation type="journal article" date="2017" name="Plant J.">
        <title>Araport11: a complete reannotation of the Arabidopsis thaliana reference genome.</title>
        <authorList>
            <person name="Cheng C.Y."/>
            <person name="Krishnakumar V."/>
            <person name="Chan A.P."/>
            <person name="Thibaud-Nissen F."/>
            <person name="Schobel S."/>
            <person name="Town C.D."/>
        </authorList>
    </citation>
    <scope>GENOME REANNOTATION</scope>
    <source>
        <strain>cv. Columbia</strain>
    </source>
</reference>
<reference key="4">
    <citation type="journal article" date="2003" name="Science">
        <title>Empirical analysis of transcriptional activity in the Arabidopsis genome.</title>
        <authorList>
            <person name="Yamada K."/>
            <person name="Lim J."/>
            <person name="Dale J.M."/>
            <person name="Chen H."/>
            <person name="Shinn P."/>
            <person name="Palm C.J."/>
            <person name="Southwick A.M."/>
            <person name="Wu H.C."/>
            <person name="Kim C.J."/>
            <person name="Nguyen M."/>
            <person name="Pham P.K."/>
            <person name="Cheuk R.F."/>
            <person name="Karlin-Newmann G."/>
            <person name="Liu S.X."/>
            <person name="Lam B."/>
            <person name="Sakano H."/>
            <person name="Wu T."/>
            <person name="Yu G."/>
            <person name="Miranda M."/>
            <person name="Quach H.L."/>
            <person name="Tripp M."/>
            <person name="Chang C.H."/>
            <person name="Lee J.M."/>
            <person name="Toriumi M.J."/>
            <person name="Chan M.M."/>
            <person name="Tang C.C."/>
            <person name="Onodera C.S."/>
            <person name="Deng J.M."/>
            <person name="Akiyama K."/>
            <person name="Ansari Y."/>
            <person name="Arakawa T."/>
            <person name="Banh J."/>
            <person name="Banno F."/>
            <person name="Bowser L."/>
            <person name="Brooks S.Y."/>
            <person name="Carninci P."/>
            <person name="Chao Q."/>
            <person name="Choy N."/>
            <person name="Enju A."/>
            <person name="Goldsmith A.D."/>
            <person name="Gurjal M."/>
            <person name="Hansen N.F."/>
            <person name="Hayashizaki Y."/>
            <person name="Johnson-Hopson C."/>
            <person name="Hsuan V.W."/>
            <person name="Iida K."/>
            <person name="Karnes M."/>
            <person name="Khan S."/>
            <person name="Koesema E."/>
            <person name="Ishida J."/>
            <person name="Jiang P.X."/>
            <person name="Jones T."/>
            <person name="Kawai J."/>
            <person name="Kamiya A."/>
            <person name="Meyers C."/>
            <person name="Nakajima M."/>
            <person name="Narusaka M."/>
            <person name="Seki M."/>
            <person name="Sakurai T."/>
            <person name="Satou M."/>
            <person name="Tamse R."/>
            <person name="Vaysberg M."/>
            <person name="Wallender E.K."/>
            <person name="Wong C."/>
            <person name="Yamamura Y."/>
            <person name="Yuan S."/>
            <person name="Shinozaki K."/>
            <person name="Davis R.W."/>
            <person name="Theologis A."/>
            <person name="Ecker J.R."/>
        </authorList>
    </citation>
    <scope>NUCLEOTIDE SEQUENCE [LARGE SCALE MRNA]</scope>
    <source>
        <strain>cv. Columbia</strain>
    </source>
</reference>
<reference key="5">
    <citation type="journal article" date="2008" name="Plant Mol. Biol.">
        <title>Analysis of Arabidopsis arginase gene transcription patterns indicates specific biological functions for recently diverged paralogs.</title>
        <authorList>
            <person name="Brownfield D.L."/>
            <person name="Todd C.D."/>
            <person name="Deyholos M.K."/>
        </authorList>
    </citation>
    <scope>TISSUE SPECIFICITY</scope>
</reference>
<reference key="6">
    <citation type="journal article" date="2008" name="Plant Physiol.">
        <title>Arginase-negative mutants of Arabidopsis exhibit increased nitric oxide signaling in root development.</title>
        <authorList>
            <person name="Flores T."/>
            <person name="Todd C.D."/>
            <person name="Tovar-Mendez A."/>
            <person name="Dhanoa P.K."/>
            <person name="Correa-Aragunde N."/>
            <person name="Hoyos M.E."/>
            <person name="Brownfield D.M."/>
            <person name="Mullen R.T."/>
            <person name="Lamattina L."/>
            <person name="Polacco J.C."/>
        </authorList>
    </citation>
    <scope>SUBCELLULAR LOCATION</scope>
    <scope>TISSUE SPECIFICITY</scope>
    <scope>DISRUPTION PHENOTYPE</scope>
</reference>
<reference key="7">
    <citation type="journal article" date="2015" name="J. Exp. Bot.">
        <title>Identification of cleavage sites and substrate proteins for two mitochondrial intermediate peptidases in Arabidopsis thaliana.</title>
        <authorList>
            <person name="Carrie C."/>
            <person name="Venne A.S."/>
            <person name="Zahedi R.P."/>
            <person name="Soll J."/>
        </authorList>
    </citation>
    <scope>IDENTIFICATION BY MASS SPECTROMETRY</scope>
    <scope>CLEAVAGE OF TRANSIT PEPTIDE AFTER THR-22</scope>
</reference>
<reference key="8">
    <citation type="journal article" date="2017" name="Plant Sci.">
        <title>Dual functioning of plant arginases provides a third route for putrescine synthesis.</title>
        <authorList>
            <person name="Patel J."/>
            <person name="Ariyaratne M."/>
            <person name="Ahmed S."/>
            <person name="Ge L."/>
            <person name="Phuntumart V."/>
            <person name="Kalinoski A."/>
            <person name="Morris P.F."/>
        </authorList>
    </citation>
    <scope>FUNCTION</scope>
    <scope>CATALYTIC ACTIVITY</scope>
</reference>
<reference key="9">
    <citation type="journal article" date="2020" name="Front. Plant Sci.">
        <title>The neighboring subunit is engaged to stabilize the substrate in the active site of plant arginases.</title>
        <authorList>
            <person name="Sekula B."/>
        </authorList>
    </citation>
    <scope>X-RAY CRYSTALLOGRAPHY (2.25 ANGSTROMS) OF 25-342 IN COMPLEX WITH ORNITHINE AND MANGANESE IONS</scope>
    <scope>FUNCTION</scope>
    <scope>CATALYTIC ACTIVITY</scope>
    <scope>SUBUNIT</scope>
</reference>